<accession>A9NGF8</accession>
<sequence length="420" mass="48170">MNYIKVKGTYDVLPTEAENWVALESYVRKLFKTYNYGEIRTPMMEYSNVIHRETELSDMVIKETYNFKDKSDRDLTLRPEGTAGVIRSYVENKLYAQAGVTKLYYMGPNFRYERPQKGRFRQFMQFGCEVLGSNEPSIDAEVIELAYETIYRLGLKQVSVKLNSLGDDASKANYRQALIDFLTPVKDKLSKDSQDRLTHNPLRILDSKDTADIELIKNAPLPLDYLNETSKQHFDSVLELLNLMNIPYEIDRKLVRGLDYYAHTVFEIHATIKGFGAQNALGGGGRYQNLVKELGGPDTPGIGYAFGMERLLSALEQEGITLTSPKQLDVYFITFDQQSRKKAIQLQHILRSENILSDIDHLNRGFKPQLKEALRYDSKFIIIIGENELNNNVVQLKNTKTEEQVEVSMDTLLDTLKELL</sequence>
<reference key="1">
    <citation type="journal article" date="2011" name="J. Bacteriol.">
        <title>Complete genome and proteome of Acholeplasma laidlawii.</title>
        <authorList>
            <person name="Lazarev V.N."/>
            <person name="Levitskii S.A."/>
            <person name="Basovskii Y.I."/>
            <person name="Chukin M.M."/>
            <person name="Akopian T.A."/>
            <person name="Vereshchagin V.V."/>
            <person name="Kostrjukova E.S."/>
            <person name="Kovaleva G.Y."/>
            <person name="Kazanov M.D."/>
            <person name="Malko D.B."/>
            <person name="Vitreschak A.G."/>
            <person name="Sernova N.V."/>
            <person name="Gelfand M.S."/>
            <person name="Demina I.A."/>
            <person name="Serebryakova M.V."/>
            <person name="Galyamina M.A."/>
            <person name="Vtyurin N.N."/>
            <person name="Rogov S.I."/>
            <person name="Alexeev D.G."/>
            <person name="Ladygina V.G."/>
            <person name="Govorun V.M."/>
        </authorList>
    </citation>
    <scope>NUCLEOTIDE SEQUENCE [LARGE SCALE GENOMIC DNA]</scope>
    <source>
        <strain>PG-8A</strain>
    </source>
</reference>
<keyword id="KW-0030">Aminoacyl-tRNA synthetase</keyword>
<keyword id="KW-0067">ATP-binding</keyword>
<keyword id="KW-0963">Cytoplasm</keyword>
<keyword id="KW-0436">Ligase</keyword>
<keyword id="KW-0547">Nucleotide-binding</keyword>
<keyword id="KW-0648">Protein biosynthesis</keyword>
<keyword id="KW-1185">Reference proteome</keyword>
<feature type="chain" id="PRO_1000076258" description="Histidine--tRNA ligase">
    <location>
        <begin position="1"/>
        <end position="420"/>
    </location>
</feature>
<comment type="catalytic activity">
    <reaction evidence="1">
        <text>tRNA(His) + L-histidine + ATP = L-histidyl-tRNA(His) + AMP + diphosphate + H(+)</text>
        <dbReference type="Rhea" id="RHEA:17313"/>
        <dbReference type="Rhea" id="RHEA-COMP:9665"/>
        <dbReference type="Rhea" id="RHEA-COMP:9689"/>
        <dbReference type="ChEBI" id="CHEBI:15378"/>
        <dbReference type="ChEBI" id="CHEBI:30616"/>
        <dbReference type="ChEBI" id="CHEBI:33019"/>
        <dbReference type="ChEBI" id="CHEBI:57595"/>
        <dbReference type="ChEBI" id="CHEBI:78442"/>
        <dbReference type="ChEBI" id="CHEBI:78527"/>
        <dbReference type="ChEBI" id="CHEBI:456215"/>
        <dbReference type="EC" id="6.1.1.21"/>
    </reaction>
</comment>
<comment type="subunit">
    <text evidence="1">Homodimer.</text>
</comment>
<comment type="subcellular location">
    <subcellularLocation>
        <location evidence="1">Cytoplasm</location>
    </subcellularLocation>
</comment>
<comment type="similarity">
    <text evidence="1">Belongs to the class-II aminoacyl-tRNA synthetase family.</text>
</comment>
<dbReference type="EC" id="6.1.1.21" evidence="1"/>
<dbReference type="EMBL" id="CP000896">
    <property type="protein sequence ID" value="ABX81438.1"/>
    <property type="molecule type" value="Genomic_DNA"/>
</dbReference>
<dbReference type="RefSeq" id="WP_012242769.1">
    <property type="nucleotide sequence ID" value="NC_010163.1"/>
</dbReference>
<dbReference type="SMR" id="A9NGF8"/>
<dbReference type="STRING" id="441768.ACL_0824"/>
<dbReference type="GeneID" id="41338979"/>
<dbReference type="KEGG" id="acl:ACL_0824"/>
<dbReference type="eggNOG" id="COG0124">
    <property type="taxonomic scope" value="Bacteria"/>
</dbReference>
<dbReference type="HOGENOM" id="CLU_025113_1_1_14"/>
<dbReference type="OrthoDB" id="9800814at2"/>
<dbReference type="Proteomes" id="UP000008558">
    <property type="component" value="Chromosome"/>
</dbReference>
<dbReference type="GO" id="GO:0005737">
    <property type="term" value="C:cytoplasm"/>
    <property type="evidence" value="ECO:0007669"/>
    <property type="project" value="UniProtKB-SubCell"/>
</dbReference>
<dbReference type="GO" id="GO:0005524">
    <property type="term" value="F:ATP binding"/>
    <property type="evidence" value="ECO:0007669"/>
    <property type="project" value="UniProtKB-UniRule"/>
</dbReference>
<dbReference type="GO" id="GO:0004821">
    <property type="term" value="F:histidine-tRNA ligase activity"/>
    <property type="evidence" value="ECO:0007669"/>
    <property type="project" value="UniProtKB-UniRule"/>
</dbReference>
<dbReference type="GO" id="GO:0006427">
    <property type="term" value="P:histidyl-tRNA aminoacylation"/>
    <property type="evidence" value="ECO:0007669"/>
    <property type="project" value="UniProtKB-UniRule"/>
</dbReference>
<dbReference type="CDD" id="cd00773">
    <property type="entry name" value="HisRS-like_core"/>
    <property type="match status" value="1"/>
</dbReference>
<dbReference type="CDD" id="cd00859">
    <property type="entry name" value="HisRS_anticodon"/>
    <property type="match status" value="1"/>
</dbReference>
<dbReference type="Gene3D" id="3.40.50.800">
    <property type="entry name" value="Anticodon-binding domain"/>
    <property type="match status" value="1"/>
</dbReference>
<dbReference type="Gene3D" id="3.30.930.10">
    <property type="entry name" value="Bira Bifunctional Protein, Domain 2"/>
    <property type="match status" value="1"/>
</dbReference>
<dbReference type="HAMAP" id="MF_00127">
    <property type="entry name" value="His_tRNA_synth"/>
    <property type="match status" value="1"/>
</dbReference>
<dbReference type="InterPro" id="IPR006195">
    <property type="entry name" value="aa-tRNA-synth_II"/>
</dbReference>
<dbReference type="InterPro" id="IPR045864">
    <property type="entry name" value="aa-tRNA-synth_II/BPL/LPL"/>
</dbReference>
<dbReference type="InterPro" id="IPR004154">
    <property type="entry name" value="Anticodon-bd"/>
</dbReference>
<dbReference type="InterPro" id="IPR036621">
    <property type="entry name" value="Anticodon-bd_dom_sf"/>
</dbReference>
<dbReference type="InterPro" id="IPR015807">
    <property type="entry name" value="His-tRNA-ligase"/>
</dbReference>
<dbReference type="InterPro" id="IPR041715">
    <property type="entry name" value="HisRS-like_core"/>
</dbReference>
<dbReference type="InterPro" id="IPR004516">
    <property type="entry name" value="HisRS/HisZ"/>
</dbReference>
<dbReference type="InterPro" id="IPR033656">
    <property type="entry name" value="HisRS_anticodon"/>
</dbReference>
<dbReference type="NCBIfam" id="TIGR00442">
    <property type="entry name" value="hisS"/>
    <property type="match status" value="1"/>
</dbReference>
<dbReference type="PANTHER" id="PTHR43707:SF1">
    <property type="entry name" value="HISTIDINE--TRNA LIGASE, MITOCHONDRIAL-RELATED"/>
    <property type="match status" value="1"/>
</dbReference>
<dbReference type="PANTHER" id="PTHR43707">
    <property type="entry name" value="HISTIDYL-TRNA SYNTHETASE"/>
    <property type="match status" value="1"/>
</dbReference>
<dbReference type="Pfam" id="PF03129">
    <property type="entry name" value="HGTP_anticodon"/>
    <property type="match status" value="1"/>
</dbReference>
<dbReference type="Pfam" id="PF13393">
    <property type="entry name" value="tRNA-synt_His"/>
    <property type="match status" value="1"/>
</dbReference>
<dbReference type="PIRSF" id="PIRSF001549">
    <property type="entry name" value="His-tRNA_synth"/>
    <property type="match status" value="1"/>
</dbReference>
<dbReference type="SUPFAM" id="SSF52954">
    <property type="entry name" value="Class II aaRS ABD-related"/>
    <property type="match status" value="1"/>
</dbReference>
<dbReference type="SUPFAM" id="SSF55681">
    <property type="entry name" value="Class II aaRS and biotin synthetases"/>
    <property type="match status" value="1"/>
</dbReference>
<dbReference type="PROSITE" id="PS50862">
    <property type="entry name" value="AA_TRNA_LIGASE_II"/>
    <property type="match status" value="1"/>
</dbReference>
<evidence type="ECO:0000255" key="1">
    <source>
        <dbReference type="HAMAP-Rule" id="MF_00127"/>
    </source>
</evidence>
<name>SYH_ACHLI</name>
<gene>
    <name evidence="1" type="primary">hisS</name>
    <name type="ordered locus">ACL_0824</name>
</gene>
<organism>
    <name type="scientific">Acholeplasma laidlawii (strain PG-8A)</name>
    <dbReference type="NCBI Taxonomy" id="441768"/>
    <lineage>
        <taxon>Bacteria</taxon>
        <taxon>Bacillati</taxon>
        <taxon>Mycoplasmatota</taxon>
        <taxon>Mollicutes</taxon>
        <taxon>Acholeplasmatales</taxon>
        <taxon>Acholeplasmataceae</taxon>
        <taxon>Acholeplasma</taxon>
    </lineage>
</organism>
<protein>
    <recommendedName>
        <fullName evidence="1">Histidine--tRNA ligase</fullName>
        <ecNumber evidence="1">6.1.1.21</ecNumber>
    </recommendedName>
    <alternativeName>
        <fullName evidence="1">Histidyl-tRNA synthetase</fullName>
        <shortName evidence="1">HisRS</shortName>
    </alternativeName>
</protein>
<proteinExistence type="inferred from homology"/>